<accession>O59942</accession>
<accession>Q6MGI6</accession>
<accession>Q7RVJ9</accession>
<organism>
    <name type="scientific">Neurospora crassa (strain ATCC 24698 / 74-OR23-1A / CBS 708.71 / DSM 1257 / FGSC 987)</name>
    <dbReference type="NCBI Taxonomy" id="367110"/>
    <lineage>
        <taxon>Eukaryota</taxon>
        <taxon>Fungi</taxon>
        <taxon>Dikarya</taxon>
        <taxon>Ascomycota</taxon>
        <taxon>Pezizomycotina</taxon>
        <taxon>Sordariomycetes</taxon>
        <taxon>Sordariomycetidae</taxon>
        <taxon>Sordariales</taxon>
        <taxon>Sordariaceae</taxon>
        <taxon>Neurospora</taxon>
    </lineage>
</organism>
<reference key="1">
    <citation type="submission" date="1998-03" db="EMBL/GenBank/DDBJ databases">
        <authorList>
            <person name="Margolles-Clark E."/>
            <person name="Bowman B.J."/>
        </authorList>
    </citation>
    <scope>NUCLEOTIDE SEQUENCE [MRNA]</scope>
</reference>
<reference key="2">
    <citation type="journal article" date="2003" name="Nucleic Acids Res.">
        <title>What's in the genome of a filamentous fungus? Analysis of the Neurospora genome sequence.</title>
        <authorList>
            <person name="Mannhaupt G."/>
            <person name="Montrone C."/>
            <person name="Haase D."/>
            <person name="Mewes H.-W."/>
            <person name="Aign V."/>
            <person name="Hoheisel J.D."/>
            <person name="Fartmann B."/>
            <person name="Nyakatura G."/>
            <person name="Kempken F."/>
            <person name="Maier J."/>
            <person name="Schulte U."/>
        </authorList>
    </citation>
    <scope>NUCLEOTIDE SEQUENCE [LARGE SCALE GENOMIC DNA]</scope>
    <source>
        <strain>ATCC 24698 / 74-OR23-1A / CBS 708.71 / DSM 1257 / FGSC 987</strain>
    </source>
</reference>
<reference key="3">
    <citation type="journal article" date="2003" name="Nature">
        <title>The genome sequence of the filamentous fungus Neurospora crassa.</title>
        <authorList>
            <person name="Galagan J.E."/>
            <person name="Calvo S.E."/>
            <person name="Borkovich K.A."/>
            <person name="Selker E.U."/>
            <person name="Read N.D."/>
            <person name="Jaffe D.B."/>
            <person name="FitzHugh W."/>
            <person name="Ma L.-J."/>
            <person name="Smirnov S."/>
            <person name="Purcell S."/>
            <person name="Rehman B."/>
            <person name="Elkins T."/>
            <person name="Engels R."/>
            <person name="Wang S."/>
            <person name="Nielsen C.B."/>
            <person name="Butler J."/>
            <person name="Endrizzi M."/>
            <person name="Qui D."/>
            <person name="Ianakiev P."/>
            <person name="Bell-Pedersen D."/>
            <person name="Nelson M.A."/>
            <person name="Werner-Washburne M."/>
            <person name="Selitrennikoff C.P."/>
            <person name="Kinsey J.A."/>
            <person name="Braun E.L."/>
            <person name="Zelter A."/>
            <person name="Schulte U."/>
            <person name="Kothe G.O."/>
            <person name="Jedd G."/>
            <person name="Mewes H.-W."/>
            <person name="Staben C."/>
            <person name="Marcotte E."/>
            <person name="Greenberg D."/>
            <person name="Roy A."/>
            <person name="Foley K."/>
            <person name="Naylor J."/>
            <person name="Stange-Thomann N."/>
            <person name="Barrett R."/>
            <person name="Gnerre S."/>
            <person name="Kamal M."/>
            <person name="Kamvysselis M."/>
            <person name="Mauceli E.W."/>
            <person name="Bielke C."/>
            <person name="Rudd S."/>
            <person name="Frishman D."/>
            <person name="Krystofova S."/>
            <person name="Rasmussen C."/>
            <person name="Metzenberg R.L."/>
            <person name="Perkins D.D."/>
            <person name="Kroken S."/>
            <person name="Cogoni C."/>
            <person name="Macino G."/>
            <person name="Catcheside D.E.A."/>
            <person name="Li W."/>
            <person name="Pratt R.J."/>
            <person name="Osmani S.A."/>
            <person name="DeSouza C.P.C."/>
            <person name="Glass N.L."/>
            <person name="Orbach M.J."/>
            <person name="Berglund J.A."/>
            <person name="Voelker R."/>
            <person name="Yarden O."/>
            <person name="Plamann M."/>
            <person name="Seiler S."/>
            <person name="Dunlap J.C."/>
            <person name="Radford A."/>
            <person name="Aramayo R."/>
            <person name="Natvig D.O."/>
            <person name="Alex L.A."/>
            <person name="Mannhaupt G."/>
            <person name="Ebbole D.J."/>
            <person name="Freitag M."/>
            <person name="Paulsen I."/>
            <person name="Sachs M.S."/>
            <person name="Lander E.S."/>
            <person name="Nusbaum C."/>
            <person name="Birren B.W."/>
        </authorList>
    </citation>
    <scope>NUCLEOTIDE SEQUENCE [LARGE SCALE GENOMIC DNA]</scope>
    <source>
        <strain>ATCC 24698 / 74-OR23-1A / CBS 708.71 / DSM 1257 / FGSC 987</strain>
    </source>
</reference>
<comment type="subcellular location">
    <subcellularLocation>
        <location evidence="3">Membrane</location>
        <topology evidence="3">Multi-pass membrane protein</topology>
    </subcellularLocation>
</comment>
<comment type="similarity">
    <text evidence="3">Belongs to the amino acid-polyamine-organocation (APC) superfamily.</text>
</comment>
<comment type="sequence caution" evidence="3">
    <conflict type="frameshift">
        <sequence resource="EMBL-CDS" id="AAC08355"/>
    </conflict>
</comment>
<sequence length="541" mass="58734">MSFSPPNKSADATIQITEMTRQGTPSSGEAAASTPSTSSTESGDKALEALGYTPVFKREFSRWSSFSFAMSISGVYGTLMSTWIYGLQAGGAAAIMWSWIIGGAGGWALAYSIAEIASAYPSSGAMYFTLKFLAPEEQVPFLCWIAGYLNLVGTVAGGASTEYAASQMLLAAVSITSNFSYVPTPTHVVGVMIGLTTIHAMINTLPTAWLNRLTSGYVVFHISVLLGACVTLLVQKRHDMHDLKYAFTNFQPSSGWSPPGFAFLFGCLTPAWIMTGCDGTARIAEEAKNPQMVVPRAIANATTFTYVIGFFFNLVLVVCMGDPKDLINSPSGQPVAQLFFNGMGRAPAIFFTLCGFGVMNLVAIPGIQAGSRTIFALSRDNLLPFSHIWVRISKRSQTPLIAVWTYAVLEIIINLLGLASSTAIGAVFNVCTVALNVSYVIPIICKMVYGRMQKGPWHMGKYSVWVNAFAVAWNTFMAVIFFFPTRLPVTPENMNYAIVVFFFVLIFALVFWYTHGRHYYTGPLTHSPRATDMSVRTPVGV</sequence>
<feature type="chain" id="PRO_0000054182" description="Amino-acid permease 2">
    <location>
        <begin position="1"/>
        <end position="541"/>
    </location>
</feature>
<feature type="transmembrane region" description="Helical" evidence="1">
    <location>
        <begin position="66"/>
        <end position="86"/>
    </location>
</feature>
<feature type="transmembrane region" description="Helical" evidence="1">
    <location>
        <begin position="90"/>
        <end position="110"/>
    </location>
</feature>
<feature type="transmembrane region" description="Helical" evidence="1">
    <location>
        <begin position="139"/>
        <end position="159"/>
    </location>
</feature>
<feature type="transmembrane region" description="Helical" evidence="1">
    <location>
        <begin position="188"/>
        <end position="208"/>
    </location>
</feature>
<feature type="transmembrane region" description="Helical" evidence="1">
    <location>
        <begin position="214"/>
        <end position="234"/>
    </location>
</feature>
<feature type="transmembrane region" description="Helical" evidence="1">
    <location>
        <begin position="255"/>
        <end position="275"/>
    </location>
</feature>
<feature type="transmembrane region" description="Helical" evidence="1">
    <location>
        <begin position="301"/>
        <end position="321"/>
    </location>
</feature>
<feature type="transmembrane region" description="Helical" evidence="1">
    <location>
        <begin position="347"/>
        <end position="367"/>
    </location>
</feature>
<feature type="transmembrane region" description="Helical" evidence="1">
    <location>
        <begin position="399"/>
        <end position="419"/>
    </location>
</feature>
<feature type="transmembrane region" description="Helical" evidence="1">
    <location>
        <begin position="424"/>
        <end position="444"/>
    </location>
</feature>
<feature type="transmembrane region" description="Helical" evidence="1">
    <location>
        <begin position="464"/>
        <end position="484"/>
    </location>
</feature>
<feature type="transmembrane region" description="Helical" evidence="1">
    <location>
        <begin position="496"/>
        <end position="516"/>
    </location>
</feature>
<feature type="region of interest" description="Disordered" evidence="2">
    <location>
        <begin position="1"/>
        <end position="43"/>
    </location>
</feature>
<feature type="compositionally biased region" description="Polar residues" evidence="2">
    <location>
        <begin position="1"/>
        <end position="22"/>
    </location>
</feature>
<feature type="compositionally biased region" description="Low complexity" evidence="2">
    <location>
        <begin position="23"/>
        <end position="41"/>
    </location>
</feature>
<feature type="sequence conflict" description="In Ref. 1; AAC08355." evidence="3" ref="1">
    <original>M</original>
    <variation>V</variation>
    <location>
        <position position="70"/>
    </location>
</feature>
<feature type="sequence conflict" description="In Ref. 1; AAC08355." evidence="3" ref="1">
    <original>I</original>
    <variation>M</variation>
    <location>
        <position position="367"/>
    </location>
</feature>
<feature type="sequence conflict" description="In Ref. 1; AAC08355." evidence="3" ref="1">
    <original>L</original>
    <variation>V</variation>
    <location>
        <position position="487"/>
    </location>
</feature>
<feature type="sequence conflict" description="In Ref. 1; AAC08355." evidence="3" ref="1">
    <original>F</original>
    <variation>L</variation>
    <location>
        <position position="507"/>
    </location>
</feature>
<name>AAP2_NEUCR</name>
<dbReference type="EMBL" id="AF053231">
    <property type="protein sequence ID" value="AAC08355.1"/>
    <property type="status" value="ALT_FRAME"/>
    <property type="molecule type" value="mRNA"/>
</dbReference>
<dbReference type="EMBL" id="BX842680">
    <property type="protein sequence ID" value="CAE81952.1"/>
    <property type="molecule type" value="Genomic_DNA"/>
</dbReference>
<dbReference type="EMBL" id="CM002236">
    <property type="protein sequence ID" value="EAA34926.3"/>
    <property type="molecule type" value="Genomic_DNA"/>
</dbReference>
<dbReference type="RefSeq" id="XP_964162.3">
    <property type="nucleotide sequence ID" value="XM_959069.3"/>
</dbReference>
<dbReference type="SMR" id="O59942"/>
<dbReference type="STRING" id="367110.O59942"/>
<dbReference type="PaxDb" id="5141-EFNCRP00000000617"/>
<dbReference type="EnsemblFungi" id="EAA34926">
    <property type="protein sequence ID" value="EAA34926"/>
    <property type="gene ID" value="NCU00765"/>
</dbReference>
<dbReference type="GeneID" id="3880302"/>
<dbReference type="KEGG" id="ncr:NCU00765"/>
<dbReference type="VEuPathDB" id="FungiDB:NCU00765"/>
<dbReference type="HOGENOM" id="CLU_004495_0_1_1"/>
<dbReference type="InParanoid" id="O59942"/>
<dbReference type="OrthoDB" id="10054429at2759"/>
<dbReference type="Proteomes" id="UP000001805">
    <property type="component" value="Chromosome 1, Linkage Group I"/>
</dbReference>
<dbReference type="GO" id="GO:0016020">
    <property type="term" value="C:membrane"/>
    <property type="evidence" value="ECO:0007669"/>
    <property type="project" value="UniProtKB-SubCell"/>
</dbReference>
<dbReference type="GO" id="GO:0015185">
    <property type="term" value="F:gamma-aminobutyric acid transmembrane transporter activity"/>
    <property type="evidence" value="ECO:0000318"/>
    <property type="project" value="GO_Central"/>
</dbReference>
<dbReference type="GO" id="GO:0015812">
    <property type="term" value="P:gamma-aminobutyric acid transport"/>
    <property type="evidence" value="ECO:0000318"/>
    <property type="project" value="GO_Central"/>
</dbReference>
<dbReference type="Gene3D" id="1.20.1740.10">
    <property type="entry name" value="Amino acid/polyamine transporter I"/>
    <property type="match status" value="1"/>
</dbReference>
<dbReference type="InterPro" id="IPR002293">
    <property type="entry name" value="AA/rel_permease1"/>
</dbReference>
<dbReference type="InterPro" id="IPR004756">
    <property type="entry name" value="AA_permease"/>
</dbReference>
<dbReference type="InterPro" id="IPR004840">
    <property type="entry name" value="Amino_acid_permease_CS"/>
</dbReference>
<dbReference type="NCBIfam" id="TIGR00907">
    <property type="entry name" value="2A0304"/>
    <property type="match status" value="1"/>
</dbReference>
<dbReference type="PANTHER" id="PTHR45649:SF9">
    <property type="entry name" value="AMINO-ACID PERMEASE 2"/>
    <property type="match status" value="1"/>
</dbReference>
<dbReference type="PANTHER" id="PTHR45649">
    <property type="entry name" value="AMINO-ACID PERMEASE BAT1"/>
    <property type="match status" value="1"/>
</dbReference>
<dbReference type="Pfam" id="PF13520">
    <property type="entry name" value="AA_permease_2"/>
    <property type="match status" value="1"/>
</dbReference>
<dbReference type="PIRSF" id="PIRSF006060">
    <property type="entry name" value="AA_transporter"/>
    <property type="match status" value="1"/>
</dbReference>
<dbReference type="PROSITE" id="PS00218">
    <property type="entry name" value="AMINO_ACID_PERMEASE_1"/>
    <property type="match status" value="1"/>
</dbReference>
<keyword id="KW-0029">Amino-acid transport</keyword>
<keyword id="KW-0472">Membrane</keyword>
<keyword id="KW-1185">Reference proteome</keyword>
<keyword id="KW-0812">Transmembrane</keyword>
<keyword id="KW-1133">Transmembrane helix</keyword>
<keyword id="KW-0813">Transport</keyword>
<evidence type="ECO:0000255" key="1"/>
<evidence type="ECO:0000256" key="2">
    <source>
        <dbReference type="SAM" id="MobiDB-lite"/>
    </source>
</evidence>
<evidence type="ECO:0000305" key="3"/>
<proteinExistence type="evidence at transcript level"/>
<protein>
    <recommendedName>
        <fullName>Amino-acid permease 2</fullName>
    </recommendedName>
</protein>
<gene>
    <name type="primary">aap-2</name>
    <name type="synonym">aap2</name>
    <name type="ORF">90C4.260</name>
    <name type="ORF">NCU00765</name>
</gene>